<evidence type="ECO:0000250" key="1">
    <source>
        <dbReference type="UniProtKB" id="D6WI29"/>
    </source>
</evidence>
<evidence type="ECO:0000250" key="2">
    <source>
        <dbReference type="UniProtKB" id="Q8N884"/>
    </source>
</evidence>
<evidence type="ECO:0000269" key="3">
    <source>
    </source>
</evidence>
<evidence type="ECO:0000303" key="4">
    <source>
    </source>
</evidence>
<evidence type="ECO:0000305" key="5"/>
<evidence type="ECO:0000305" key="6">
    <source>
    </source>
</evidence>
<evidence type="ECO:0000312" key="7">
    <source>
        <dbReference type="EMBL" id="PFX20164.1"/>
    </source>
</evidence>
<evidence type="ECO:0007744" key="8">
    <source>
        <dbReference type="PDB" id="8GJY"/>
    </source>
</evidence>
<evidence type="ECO:0007829" key="9">
    <source>
        <dbReference type="PDB" id="8GJY"/>
    </source>
</evidence>
<dbReference type="EC" id="2.7.7.-" evidence="3"/>
<dbReference type="EMBL" id="LSMT01000328">
    <property type="protein sequence ID" value="PFX20164.1"/>
    <property type="molecule type" value="Genomic_DNA"/>
</dbReference>
<dbReference type="PDB" id="8GJY">
    <property type="method" value="X-ray"/>
    <property type="resolution" value="1.50 A"/>
    <property type="chains" value="A=2-376"/>
</dbReference>
<dbReference type="PDBsum" id="8GJY"/>
<dbReference type="SMR" id="A0A2B4RP11"/>
<dbReference type="STRING" id="50429.A0A2B4RP11"/>
<dbReference type="EnsemblMetazoa" id="XM_022943503.1">
    <property type="protein sequence ID" value="XP_022799238.1"/>
    <property type="gene ID" value="LOC111337236"/>
</dbReference>
<dbReference type="EnsemblMetazoa" id="XM_022943504.1">
    <property type="protein sequence ID" value="XP_022799239.1"/>
    <property type="gene ID" value="LOC111337236"/>
</dbReference>
<dbReference type="OrthoDB" id="5982295at2759"/>
<dbReference type="Proteomes" id="UP000225706">
    <property type="component" value="Unassembled WGS sequence"/>
</dbReference>
<dbReference type="GO" id="GO:0005524">
    <property type="term" value="F:ATP binding"/>
    <property type="evidence" value="ECO:0007669"/>
    <property type="project" value="UniProtKB-KW"/>
</dbReference>
<dbReference type="GO" id="GO:0003725">
    <property type="term" value="F:double-stranded RNA binding"/>
    <property type="evidence" value="ECO:0000314"/>
    <property type="project" value="UniProtKB"/>
</dbReference>
<dbReference type="GO" id="GO:0046872">
    <property type="term" value="F:metal ion binding"/>
    <property type="evidence" value="ECO:0007669"/>
    <property type="project" value="UniProtKB-KW"/>
</dbReference>
<dbReference type="GO" id="GO:0016779">
    <property type="term" value="F:nucleotidyltransferase activity"/>
    <property type="evidence" value="ECO:0000314"/>
    <property type="project" value="UniProtKB"/>
</dbReference>
<dbReference type="GO" id="GO:0045087">
    <property type="term" value="P:innate immune response"/>
    <property type="evidence" value="ECO:0007669"/>
    <property type="project" value="UniProtKB-KW"/>
</dbReference>
<dbReference type="Gene3D" id="1.10.1410.40">
    <property type="match status" value="1"/>
</dbReference>
<dbReference type="Gene3D" id="3.30.460.90">
    <property type="match status" value="1"/>
</dbReference>
<dbReference type="InterPro" id="IPR046903">
    <property type="entry name" value="Mab-21-like_nuc_Trfase"/>
</dbReference>
<dbReference type="InterPro" id="IPR046906">
    <property type="entry name" value="Mab-21_HhH/H2TH-like"/>
</dbReference>
<dbReference type="InterPro" id="IPR024810">
    <property type="entry name" value="MAB21L/cGLR"/>
</dbReference>
<dbReference type="PANTHER" id="PTHR10656">
    <property type="entry name" value="CELL FATE DETERMINING PROTEIN MAB21-RELATED"/>
    <property type="match status" value="1"/>
</dbReference>
<dbReference type="PANTHER" id="PTHR10656:SF70">
    <property type="entry name" value="PROTEIN MAB-21-RELATED"/>
    <property type="match status" value="1"/>
</dbReference>
<dbReference type="Pfam" id="PF03281">
    <property type="entry name" value="Mab-21"/>
    <property type="match status" value="1"/>
</dbReference>
<dbReference type="Pfam" id="PF20266">
    <property type="entry name" value="Mab-21_C"/>
    <property type="match status" value="1"/>
</dbReference>
<dbReference type="SMART" id="SM01265">
    <property type="entry name" value="Mab-21"/>
    <property type="match status" value="1"/>
</dbReference>
<gene>
    <name evidence="4" type="primary">cGLR1</name>
    <name evidence="7" type="synonym">mab21l2</name>
    <name evidence="7" type="ORF">AWC38_SpisGene15409</name>
</gene>
<protein>
    <recommendedName>
        <fullName>Cyclic GMP-AMP synthase-like receptor 1</fullName>
        <shortName evidence="4">Sp-cGLR1</shortName>
    </recommendedName>
    <alternativeName>
        <fullName evidence="5">Cyclic UMP-AMP synthase cGLR1</fullName>
        <ecNumber evidence="3">2.7.7.-</ecNumber>
    </alternativeName>
</protein>
<sequence length="376" mass="44127">MSGKMNEWESLNTTLNRFTDNVVKFRRDSRTKALKCWRPIVDGIVDYVKRKDDRFHALSVFHKGSYYERSKVGEPDEFDLMLVMDNLELYDEPFEEDDGLSEPPIGFTTVMIDQGEEKPWKRDECVNRRGMLNATRVKAVFKRLADEAIQDMKSKGHWRNVTVKSGGTAVTLKISKDGREYSVDLTLGIKDNTWPEDAEEWKTRQRKGWPKRNLVHDIHEMGCHLVTKQPKGHSPIEQERGFLWCYSFSEAEKKLFLQGEQGEVNSCRRQVLRILKALREELELQPLKSYHLKTLLLYECESQPSARQWSKDALSERFLDLLKRLEKCLRSKECPHYFIKDLNLFEMLNPEKCDELADRVNKILKQPGQVLIRLIK</sequence>
<proteinExistence type="evidence at protein level"/>
<reference key="1">
    <citation type="journal article" date="2017" name="Sci. Rep.">
        <title>Comparative analysis of the genomes of Stylophora pistillata and Acropora digitifera provides evidence for extensive differences between species of corals.</title>
        <authorList>
            <person name="Voolstra C.R."/>
            <person name="Li Y."/>
            <person name="Liew Y.J."/>
            <person name="Baumgarten S."/>
            <person name="Zoccola D."/>
            <person name="Flot J.F."/>
            <person name="Tambutte S."/>
            <person name="Allemand D."/>
            <person name="Aranda M."/>
        </authorList>
    </citation>
    <scope>NUCLEOTIDE SEQUENCE [LARGE SCALE GENOMIC DNA]</scope>
</reference>
<reference evidence="8" key="2">
    <citation type="journal article" date="2023" name="Cell">
        <title>cGLRs are a diverse family of pattern recognition receptors in innate immunity.</title>
        <authorList>
            <person name="Li Y."/>
            <person name="Slavik K.M."/>
            <person name="Toyoda H.C."/>
            <person name="Morehouse B.R."/>
            <person name="de Oliveira Mann C.C."/>
            <person name="Elek A."/>
            <person name="Levy S."/>
            <person name="Wang Z."/>
            <person name="Mears K.S."/>
            <person name="Liu J."/>
            <person name="Kashin D."/>
            <person name="Guo X."/>
            <person name="Mass T."/>
            <person name="Sebe-Pedros A."/>
            <person name="Schwede F."/>
            <person name="Kranzusch P.J."/>
        </authorList>
    </citation>
    <scope>X-RAY CRYSTALLOGRAPHY (1.50 ANGSTROMS) OF 2-376</scope>
    <scope>FUNCTION</scope>
    <scope>CATALYTIC ACTIVITY</scope>
    <scope>MUTAGENESIS OF ASP-79</scope>
</reference>
<accession>A0A2B4RP11</accession>
<feature type="chain" id="PRO_0000460024" description="Cyclic GMP-AMP synthase-like receptor 1">
    <location>
        <begin position="1"/>
        <end position="376"/>
    </location>
</feature>
<feature type="binding site" evidence="2">
    <location>
        <position position="77"/>
    </location>
    <ligand>
        <name>Mg(2+)</name>
        <dbReference type="ChEBI" id="CHEBI:18420"/>
        <note>catalytic</note>
    </ligand>
</feature>
<feature type="binding site" evidence="6">
    <location>
        <position position="79"/>
    </location>
    <ligand>
        <name>Mg(2+)</name>
        <dbReference type="ChEBI" id="CHEBI:18420"/>
        <note>catalytic</note>
    </ligand>
</feature>
<feature type="mutagenesis site" description="Abolished nucleotidyltransferase activity." evidence="3">
    <original>D</original>
    <variation>N</variation>
    <location>
        <position position="79"/>
    </location>
</feature>
<feature type="helix" evidence="9">
    <location>
        <begin position="11"/>
        <end position="51"/>
    </location>
</feature>
<feature type="helix" evidence="9">
    <location>
        <begin position="53"/>
        <end position="55"/>
    </location>
</feature>
<feature type="strand" evidence="9">
    <location>
        <begin position="58"/>
        <end position="61"/>
    </location>
</feature>
<feature type="strand" evidence="9">
    <location>
        <begin position="76"/>
        <end position="84"/>
    </location>
</feature>
<feature type="helix" evidence="9">
    <location>
        <begin position="85"/>
        <end position="87"/>
    </location>
</feature>
<feature type="helix" evidence="9">
    <location>
        <begin position="114"/>
        <end position="116"/>
    </location>
</feature>
<feature type="helix" evidence="9">
    <location>
        <begin position="118"/>
        <end position="124"/>
    </location>
</feature>
<feature type="strand" evidence="9">
    <location>
        <begin position="130"/>
        <end position="132"/>
    </location>
</feature>
<feature type="helix" evidence="9">
    <location>
        <begin position="134"/>
        <end position="154"/>
    </location>
</feature>
<feature type="strand" evidence="9">
    <location>
        <begin position="161"/>
        <end position="163"/>
    </location>
</feature>
<feature type="strand" evidence="9">
    <location>
        <begin position="166"/>
        <end position="176"/>
    </location>
</feature>
<feature type="strand" evidence="9">
    <location>
        <begin position="179"/>
        <end position="191"/>
    </location>
</feature>
<feature type="helix" evidence="9">
    <location>
        <begin position="196"/>
        <end position="199"/>
    </location>
</feature>
<feature type="helix" evidence="9">
    <location>
        <begin position="200"/>
        <end position="203"/>
    </location>
</feature>
<feature type="strand" evidence="9">
    <location>
        <begin position="207"/>
        <end position="210"/>
    </location>
</feature>
<feature type="helix" evidence="9">
    <location>
        <begin position="212"/>
        <end position="221"/>
    </location>
</feature>
<feature type="strand" evidence="9">
    <location>
        <begin position="223"/>
        <end position="227"/>
    </location>
</feature>
<feature type="strand" evidence="9">
    <location>
        <begin position="244"/>
        <end position="247"/>
    </location>
</feature>
<feature type="helix" evidence="9">
    <location>
        <begin position="249"/>
        <end position="256"/>
    </location>
</feature>
<feature type="helix" evidence="9">
    <location>
        <begin position="268"/>
        <end position="281"/>
    </location>
</feature>
<feature type="helix" evidence="9">
    <location>
        <begin position="289"/>
        <end position="302"/>
    </location>
</feature>
<feature type="helix" evidence="9">
    <location>
        <begin position="306"/>
        <end position="309"/>
    </location>
</feature>
<feature type="helix" evidence="9">
    <location>
        <begin position="311"/>
        <end position="313"/>
    </location>
</feature>
<feature type="helix" evidence="9">
    <location>
        <begin position="314"/>
        <end position="331"/>
    </location>
</feature>
<feature type="strand" evidence="9">
    <location>
        <begin position="337"/>
        <end position="339"/>
    </location>
</feature>
<feature type="turn" evidence="9">
    <location>
        <begin position="344"/>
        <end position="347"/>
    </location>
</feature>
<feature type="helix" evidence="9">
    <location>
        <begin position="350"/>
        <end position="365"/>
    </location>
</feature>
<feature type="helix" evidence="9">
    <location>
        <begin position="367"/>
        <end position="375"/>
    </location>
</feature>
<name>CGLR1_STYPI</name>
<keyword id="KW-0002">3D-structure</keyword>
<keyword id="KW-0067">ATP-binding</keyword>
<keyword id="KW-0391">Immunity</keyword>
<keyword id="KW-0399">Innate immunity</keyword>
<keyword id="KW-0460">Magnesium</keyword>
<keyword id="KW-0464">Manganese</keyword>
<keyword id="KW-0479">Metal-binding</keyword>
<keyword id="KW-0547">Nucleotide-binding</keyword>
<keyword id="KW-0548">Nucleotidyltransferase</keyword>
<keyword id="KW-1185">Reference proteome</keyword>
<keyword id="KW-0694">RNA-binding</keyword>
<keyword id="KW-0808">Transferase</keyword>
<comment type="function">
    <text evidence="3">Nucleotidyltransferase that catalyzes the formation of cyclic UMP-AMP (3',3'-cUAMP) from ATP and UTP and plays a key role in innate immunity (PubMed:37379839). Acts as a key sensor of double-stranded RNA (dsRNA), the presence of dsRNA in the cytoplasm being a danger signal that triggers the immune responses (PubMed:37379839). Directly binds dsRNA, activating the nucleotidyltransferase activity, leading to synthesis of 3',3'-cUAMP, a second messenger that binds to and activates Sting, thereby triggering the immune response via activation of the NF-kappa-B transcription factor (PubMed:37379839).</text>
</comment>
<comment type="catalytic activity">
    <reaction evidence="3">
        <text>UTP + ATP = 3',3'-cUAMP + 2 diphosphate</text>
        <dbReference type="Rhea" id="RHEA:60456"/>
        <dbReference type="ChEBI" id="CHEBI:30616"/>
        <dbReference type="ChEBI" id="CHEBI:33019"/>
        <dbReference type="ChEBI" id="CHEBI:46398"/>
        <dbReference type="ChEBI" id="CHEBI:143809"/>
    </reaction>
    <physiologicalReaction direction="left-to-right" evidence="3">
        <dbReference type="Rhea" id="RHEA:60457"/>
    </physiologicalReaction>
</comment>
<comment type="cofactor">
    <cofactor evidence="1">
        <name>Mg(2+)</name>
        <dbReference type="ChEBI" id="CHEBI:18420"/>
    </cofactor>
    <cofactor evidence="1">
        <name>Mn(2+)</name>
        <dbReference type="ChEBI" id="CHEBI:29035"/>
    </cofactor>
</comment>
<comment type="similarity">
    <text evidence="5">Belongs to the mab-21 family.</text>
</comment>
<organism>
    <name type="scientific">Stylophora pistillata</name>
    <name type="common">Smooth cauliflower coral</name>
    <dbReference type="NCBI Taxonomy" id="50429"/>
    <lineage>
        <taxon>Eukaryota</taxon>
        <taxon>Metazoa</taxon>
        <taxon>Cnidaria</taxon>
        <taxon>Anthozoa</taxon>
        <taxon>Hexacorallia</taxon>
        <taxon>Scleractinia</taxon>
        <taxon>Astrocoeniina</taxon>
        <taxon>Pocilloporidae</taxon>
        <taxon>Stylophora</taxon>
    </lineage>
</organism>